<sequence length="368" mass="40887">MTTLTTTPRADGFHMPAEWAPHSQTWMVWPERPDNWRNGGKPAQAAFTAVAKAIAQFEPVTVCVSAAQYENARARLDDDNIRLVEITTDDAWVRDTGPTFVINGRGEVRGVDWTFNAWGGFDGGLYWPWQRDDQVARKILDIEGCKRYRTEGFVLEGGSIHVDGEGTLITTEECLLNRNRNPHLSREEIEAVLREHLAIDTVIWLPEGLYNDETDGHVDNFCCYVRPGEVLLAWTDDQNDPNYPRCQAAMRVLESVRDAKGRQLIVHKMPIPGPIHASEEECAGVDAAEGSQERSPAVRLAGSYVNFLIVNGGIVAPSFDDPKDAEARAILQQVFPEHRVVMVPGREILLGGGNIHCITQQQPAPQGA</sequence>
<accession>A4XP44</accession>
<proteinExistence type="inferred from homology"/>
<gene>
    <name evidence="1" type="primary">aguA</name>
    <name type="ordered locus">Pmen_0337</name>
</gene>
<reference key="1">
    <citation type="submission" date="2007-04" db="EMBL/GenBank/DDBJ databases">
        <title>Complete sequence of Pseudomonas mendocina ymp.</title>
        <authorList>
            <consortium name="US DOE Joint Genome Institute"/>
            <person name="Copeland A."/>
            <person name="Lucas S."/>
            <person name="Lapidus A."/>
            <person name="Barry K."/>
            <person name="Glavina del Rio T."/>
            <person name="Dalin E."/>
            <person name="Tice H."/>
            <person name="Pitluck S."/>
            <person name="Kiss H."/>
            <person name="Brettin T."/>
            <person name="Detter J.C."/>
            <person name="Bruce D."/>
            <person name="Han C."/>
            <person name="Schmutz J."/>
            <person name="Larimer F."/>
            <person name="Land M."/>
            <person name="Hauser L."/>
            <person name="Kyrpides N."/>
            <person name="Mikhailova N."/>
            <person name="Hersman L."/>
            <person name="Dubois J."/>
            <person name="Maurice P."/>
            <person name="Richardson P."/>
        </authorList>
    </citation>
    <scope>NUCLEOTIDE SEQUENCE [LARGE SCALE GENOMIC DNA]</scope>
    <source>
        <strain>ymp</strain>
    </source>
</reference>
<protein>
    <recommendedName>
        <fullName evidence="1">Agmatine deiminase</fullName>
        <ecNumber evidence="1">3.5.3.12</ecNumber>
    </recommendedName>
    <alternativeName>
        <fullName evidence="1">Agmatine iminohydrolase</fullName>
    </alternativeName>
</protein>
<organism>
    <name type="scientific">Ectopseudomonas mendocina (strain ymp)</name>
    <name type="common">Pseudomonas mendocina</name>
    <dbReference type="NCBI Taxonomy" id="399739"/>
    <lineage>
        <taxon>Bacteria</taxon>
        <taxon>Pseudomonadati</taxon>
        <taxon>Pseudomonadota</taxon>
        <taxon>Gammaproteobacteria</taxon>
        <taxon>Pseudomonadales</taxon>
        <taxon>Pseudomonadaceae</taxon>
        <taxon>Ectopseudomonas</taxon>
    </lineage>
</organism>
<comment type="function">
    <text evidence="1">Mediates the hydrolysis of agmatine into N-carbamoylputrescine in the arginine decarboxylase (ADC) pathway of putrescine biosynthesis, a basic polyamine.</text>
</comment>
<comment type="catalytic activity">
    <reaction evidence="1">
        <text>agmatine + H2O = N-carbamoylputrescine + NH4(+)</text>
        <dbReference type="Rhea" id="RHEA:18037"/>
        <dbReference type="ChEBI" id="CHEBI:15377"/>
        <dbReference type="ChEBI" id="CHEBI:28938"/>
        <dbReference type="ChEBI" id="CHEBI:58145"/>
        <dbReference type="ChEBI" id="CHEBI:58318"/>
        <dbReference type="EC" id="3.5.3.12"/>
    </reaction>
</comment>
<comment type="pathway">
    <text evidence="1">Amine and polyamine biosynthesis; putrescine biosynthesis via agmatine pathway; N-carbamoylputrescine from agmatine: step 1/1.</text>
</comment>
<comment type="subunit">
    <text evidence="1">Homodimer.</text>
</comment>
<comment type="similarity">
    <text evidence="1">Belongs to the agmatine deiminase family.</text>
</comment>
<feature type="chain" id="PRO_1000070563" description="Agmatine deiminase">
    <location>
        <begin position="1"/>
        <end position="368"/>
    </location>
</feature>
<feature type="active site" description="Amidino-cysteine intermediate" evidence="1">
    <location>
        <position position="357"/>
    </location>
</feature>
<name>AGUA_ECTM1</name>
<dbReference type="EC" id="3.5.3.12" evidence="1"/>
<dbReference type="EMBL" id="CP000680">
    <property type="protein sequence ID" value="ABP83110.1"/>
    <property type="molecule type" value="Genomic_DNA"/>
</dbReference>
<dbReference type="SMR" id="A4XP44"/>
<dbReference type="STRING" id="399739.Pmen_0337"/>
<dbReference type="KEGG" id="pmy:Pmen_0337"/>
<dbReference type="PATRIC" id="fig|399739.8.peg.345"/>
<dbReference type="eggNOG" id="COG2957">
    <property type="taxonomic scope" value="Bacteria"/>
</dbReference>
<dbReference type="HOGENOM" id="CLU_037682_1_0_6"/>
<dbReference type="OrthoDB" id="9808013at2"/>
<dbReference type="UniPathway" id="UPA00534">
    <property type="reaction ID" value="UER00285"/>
</dbReference>
<dbReference type="GO" id="GO:0047632">
    <property type="term" value="F:agmatine deiminase activity"/>
    <property type="evidence" value="ECO:0007669"/>
    <property type="project" value="UniProtKB-UniRule"/>
</dbReference>
<dbReference type="GO" id="GO:0004668">
    <property type="term" value="F:protein-arginine deiminase activity"/>
    <property type="evidence" value="ECO:0007669"/>
    <property type="project" value="InterPro"/>
</dbReference>
<dbReference type="GO" id="GO:0033388">
    <property type="term" value="P:putrescine biosynthetic process from arginine"/>
    <property type="evidence" value="ECO:0007669"/>
    <property type="project" value="UniProtKB-UniRule"/>
</dbReference>
<dbReference type="FunFam" id="3.75.10.10:FF:000012">
    <property type="entry name" value="Agmatine deiminase"/>
    <property type="match status" value="1"/>
</dbReference>
<dbReference type="Gene3D" id="3.75.10.10">
    <property type="entry name" value="L-arginine/glycine Amidinotransferase, Chain A"/>
    <property type="match status" value="1"/>
</dbReference>
<dbReference type="HAMAP" id="MF_01841">
    <property type="entry name" value="Agmatine_deimin"/>
    <property type="match status" value="1"/>
</dbReference>
<dbReference type="InterPro" id="IPR017754">
    <property type="entry name" value="Agmatine_deiminase"/>
</dbReference>
<dbReference type="InterPro" id="IPR007466">
    <property type="entry name" value="Peptidyl-Arg-deiminase_porph"/>
</dbReference>
<dbReference type="NCBIfam" id="TIGR03380">
    <property type="entry name" value="agmatine_aguA"/>
    <property type="match status" value="1"/>
</dbReference>
<dbReference type="NCBIfam" id="NF010070">
    <property type="entry name" value="PRK13551.1"/>
    <property type="match status" value="1"/>
</dbReference>
<dbReference type="PANTHER" id="PTHR31377">
    <property type="entry name" value="AGMATINE DEIMINASE-RELATED"/>
    <property type="match status" value="1"/>
</dbReference>
<dbReference type="PANTHER" id="PTHR31377:SF0">
    <property type="entry name" value="AGMATINE DEIMINASE-RELATED"/>
    <property type="match status" value="1"/>
</dbReference>
<dbReference type="Pfam" id="PF04371">
    <property type="entry name" value="PAD_porph"/>
    <property type="match status" value="1"/>
</dbReference>
<dbReference type="SUPFAM" id="SSF55909">
    <property type="entry name" value="Pentein"/>
    <property type="match status" value="1"/>
</dbReference>
<evidence type="ECO:0000255" key="1">
    <source>
        <dbReference type="HAMAP-Rule" id="MF_01841"/>
    </source>
</evidence>
<keyword id="KW-0378">Hydrolase</keyword>
<keyword id="KW-0620">Polyamine biosynthesis</keyword>